<evidence type="ECO:0000269" key="1">
    <source>
    </source>
</evidence>
<evidence type="ECO:0000303" key="2">
    <source>
    </source>
</evidence>
<evidence type="ECO:0000305" key="3"/>
<evidence type="ECO:0000305" key="4">
    <source>
    </source>
</evidence>
<name>APRR_ASPFN</name>
<sequence>MTIKVIVVGAGGNLGHHIVSALDDDHRFTVTILARASSKSKFPSHITVHRVDDYYPELEVVEAFKGQDVVISTVTTGAIQRQKTLIDAALKAGVGRFIPSEFGHDTRNGNASKMLPQMYQQKREVVEYLRAKQNDGLEWTAFVTGPFLEVAIENFLGFNLSQQHATILNEGSDRWSATTRATVGLAVKNSLLIPEKTSNRYLFIDTVTASQNDVLLALRKMTGTEWGVDYVDAEEQKRVAIEHLSKGRLIGIPMLMRYITCVRGYGGDYLDYETSANEILSLPVRNVDEVIASILKG</sequence>
<protein>
    <recommendedName>
        <fullName evidence="2">Oxidoreductase aprR</fullName>
        <ecNumber evidence="4">1.3.1.-</ecNumber>
    </recommendedName>
    <alternativeName>
        <fullName evidence="2">Asperipin-2a biosynthesis cluster protein R</fullName>
    </alternativeName>
</protein>
<proteinExistence type="inferred from homology"/>
<reference key="1">
    <citation type="journal article" date="2015" name="Genome Announc.">
        <title>Genome sequence of Aspergillus flavus NRRL 3357, a strain that causes aflatoxin contamination of food and feed.</title>
        <authorList>
            <person name="Nierman W.C."/>
            <person name="Yu J."/>
            <person name="Fedorova-Abrams N.D."/>
            <person name="Losada L."/>
            <person name="Cleveland T.E."/>
            <person name="Bhatnagar D."/>
            <person name="Bennett J.W."/>
            <person name="Dean R."/>
            <person name="Payne G.A."/>
        </authorList>
    </citation>
    <scope>NUCLEOTIDE SEQUENCE [LARGE SCALE GENOMIC DNA]</scope>
    <source>
        <strain>ATCC 200026 / FGSC A1120 / IAM 13836 / NRRL 3357 / JCM 12722 / SRRC 167</strain>
    </source>
</reference>
<reference key="2">
    <citation type="journal article" date="2018" name="Org. Biomol. Chem.">
        <title>Heterologous production of asperipin-2a: proposal for sequential oxidative macrocyclization by a fungi-specific DUF3328 oxidase.</title>
        <authorList>
            <person name="Ye Y."/>
            <person name="Ozaki T."/>
            <person name="Umemura M."/>
            <person name="Liu C."/>
            <person name="Minami A."/>
            <person name="Oikawa H."/>
        </authorList>
    </citation>
    <scope>FUNCTION</scope>
    <scope>PATHWAY</scope>
</reference>
<feature type="chain" id="PRO_0000458380" description="Oxidoreductase aprR">
    <location>
        <begin position="1"/>
        <end position="297"/>
    </location>
</feature>
<organism>
    <name type="scientific">Aspergillus flavus (strain ATCC 200026 / FGSC A1120 / IAM 13836 / NRRL 3357 / JCM 12722 / SRRC 167)</name>
    <dbReference type="NCBI Taxonomy" id="332952"/>
    <lineage>
        <taxon>Eukaryota</taxon>
        <taxon>Fungi</taxon>
        <taxon>Dikarya</taxon>
        <taxon>Ascomycota</taxon>
        <taxon>Pezizomycotina</taxon>
        <taxon>Eurotiomycetes</taxon>
        <taxon>Eurotiomycetidae</taxon>
        <taxon>Eurotiales</taxon>
        <taxon>Aspergillaceae</taxon>
        <taxon>Aspergillus</taxon>
        <taxon>Aspergillus subgen. Circumdati</taxon>
    </lineage>
</organism>
<gene>
    <name evidence="2" type="primary">aprR</name>
    <name type="ORF">AFLA_041370</name>
</gene>
<dbReference type="EC" id="1.3.1.-" evidence="4"/>
<dbReference type="EMBL" id="EQ963476">
    <property type="protein sequence ID" value="EED52435.1"/>
    <property type="molecule type" value="Genomic_DNA"/>
</dbReference>
<dbReference type="RefSeq" id="XP_002377599.1">
    <property type="nucleotide sequence ID" value="XM_002377558.1"/>
</dbReference>
<dbReference type="SMR" id="B8NCG2"/>
<dbReference type="STRING" id="332952.B8NCG2"/>
<dbReference type="EnsemblFungi" id="EED52435">
    <property type="protein sequence ID" value="EED52435"/>
    <property type="gene ID" value="AFLA_041370"/>
</dbReference>
<dbReference type="VEuPathDB" id="FungiDB:AFLA_007701"/>
<dbReference type="eggNOG" id="ENOG502S12R">
    <property type="taxonomic scope" value="Eukaryota"/>
</dbReference>
<dbReference type="HOGENOM" id="CLU_044876_3_3_1"/>
<dbReference type="OMA" id="MRYITCV"/>
<dbReference type="GO" id="GO:0016491">
    <property type="term" value="F:oxidoreductase activity"/>
    <property type="evidence" value="ECO:0007669"/>
    <property type="project" value="UniProtKB-KW"/>
</dbReference>
<dbReference type="CDD" id="cd05259">
    <property type="entry name" value="PCBER_SDR_a"/>
    <property type="match status" value="1"/>
</dbReference>
<dbReference type="Gene3D" id="3.40.50.720">
    <property type="entry name" value="NAD(P)-binding Rossmann-like Domain"/>
    <property type="match status" value="1"/>
</dbReference>
<dbReference type="Gene3D" id="3.90.25.10">
    <property type="entry name" value="UDP-galactose 4-epimerase, domain 1"/>
    <property type="match status" value="1"/>
</dbReference>
<dbReference type="InterPro" id="IPR036291">
    <property type="entry name" value="NAD(P)-bd_dom_sf"/>
</dbReference>
<dbReference type="InterPro" id="IPR008030">
    <property type="entry name" value="NmrA-like"/>
</dbReference>
<dbReference type="InterPro" id="IPR051609">
    <property type="entry name" value="NmrA/Isoflavone_reductase-like"/>
</dbReference>
<dbReference type="InterPro" id="IPR045312">
    <property type="entry name" value="PCBER-like"/>
</dbReference>
<dbReference type="PANTHER" id="PTHR47706:SF9">
    <property type="entry name" value="NMRA-LIKE DOMAIN-CONTAINING PROTEIN-RELATED"/>
    <property type="match status" value="1"/>
</dbReference>
<dbReference type="PANTHER" id="PTHR47706">
    <property type="entry name" value="NMRA-LIKE FAMILY PROTEIN"/>
    <property type="match status" value="1"/>
</dbReference>
<dbReference type="Pfam" id="PF05368">
    <property type="entry name" value="NmrA"/>
    <property type="match status" value="1"/>
</dbReference>
<dbReference type="SUPFAM" id="SSF51735">
    <property type="entry name" value="NAD(P)-binding Rossmann-fold domains"/>
    <property type="match status" value="1"/>
</dbReference>
<accession>B8NCG2</accession>
<keyword id="KW-0521">NADP</keyword>
<keyword id="KW-0560">Oxidoreductase</keyword>
<comment type="function">
    <text evidence="1 4">Oxidoreductase; part of the gene cluster that mediates the biosynthesis of the asperipin-2a, a bicyclic peptide that possesses two macrocyclic ether rings consisting of 14- and 17-membered paracyclophans (PubMed:30516224). The pathway starts with the processing of the precursor aprA by kexin proteases to produce 11 identical copies of the hexapeptide Phe-Tyr-Tyr-Thr-Gly-Tyr. Macrocyclization of asperipin-2a may accompany an alpha-hydroxylation-dehydration sequence to give an imine, which is readily hydrolyzed to yield putative ketone intermediate. The reductase aprR may be required for the final reduction to yield asperipin-2a (Probable).</text>
</comment>
<comment type="pathway">
    <text evidence="1">Secondary metabolite biosynthesis.</text>
</comment>
<comment type="similarity">
    <text evidence="3">Belongs to the NmrA-type oxidoreductase family. Isoflavone reductase subfamily.</text>
</comment>